<name>NALCN_MOUSE</name>
<dbReference type="EMBL" id="AK039034">
    <property type="protein sequence ID" value="BAC30213.1"/>
    <property type="molecule type" value="mRNA"/>
</dbReference>
<dbReference type="EMBL" id="AK044431">
    <property type="protein sequence ID" value="BAC31915.1"/>
    <property type="status" value="ALT_FRAME"/>
    <property type="molecule type" value="mRNA"/>
</dbReference>
<dbReference type="EMBL" id="AC102783">
    <property type="status" value="NOT_ANNOTATED_CDS"/>
    <property type="molecule type" value="Genomic_DNA"/>
</dbReference>
<dbReference type="EMBL" id="AC154677">
    <property type="status" value="NOT_ANNOTATED_CDS"/>
    <property type="molecule type" value="Genomic_DNA"/>
</dbReference>
<dbReference type="EMBL" id="AC124818">
    <property type="status" value="NOT_ANNOTATED_CDS"/>
    <property type="molecule type" value="Genomic_DNA"/>
</dbReference>
<dbReference type="RefSeq" id="NP_796367.3">
    <property type="nucleotide sequence ID" value="NM_177393.4"/>
</dbReference>
<dbReference type="SMR" id="Q8BXR5"/>
<dbReference type="BioGRID" id="237222">
    <property type="interactions" value="8"/>
</dbReference>
<dbReference type="DIP" id="DIP-59731N"/>
<dbReference type="FunCoup" id="Q8BXR5">
    <property type="interactions" value="307"/>
</dbReference>
<dbReference type="IntAct" id="Q8BXR5">
    <property type="interactions" value="2"/>
</dbReference>
<dbReference type="STRING" id="10090.ENSMUSP00000000201"/>
<dbReference type="GlyCosmos" id="Q8BXR5">
    <property type="glycosylation" value="3 sites, No reported glycans"/>
</dbReference>
<dbReference type="GlyGen" id="Q8BXR5">
    <property type="glycosylation" value="3 sites, 1 N-linked glycan (1 site)"/>
</dbReference>
<dbReference type="iPTMnet" id="Q8BXR5"/>
<dbReference type="PhosphoSitePlus" id="Q8BXR5"/>
<dbReference type="PaxDb" id="10090-ENSMUSP00000000201"/>
<dbReference type="ProteomicsDB" id="293619">
    <molecule id="Q8BXR5-1"/>
</dbReference>
<dbReference type="ABCD" id="Q8BXR5">
    <property type="antibodies" value="1 sequenced antibody"/>
</dbReference>
<dbReference type="DNASU" id="338370"/>
<dbReference type="GeneID" id="338370"/>
<dbReference type="KEGG" id="mmu:338370"/>
<dbReference type="UCSC" id="uc007vbr.1">
    <molecule id="Q8BXR5-1"/>
    <property type="organism name" value="mouse"/>
</dbReference>
<dbReference type="UCSC" id="uc007vbs.1">
    <molecule id="Q8BXR5-2"/>
    <property type="organism name" value="mouse"/>
</dbReference>
<dbReference type="AGR" id="MGI:2444306"/>
<dbReference type="CTD" id="259232"/>
<dbReference type="MGI" id="MGI:2444306">
    <property type="gene designation" value="Nalcn"/>
</dbReference>
<dbReference type="eggNOG" id="KOG2301">
    <property type="taxonomic scope" value="Eukaryota"/>
</dbReference>
<dbReference type="InParanoid" id="Q8BXR5"/>
<dbReference type="OrthoDB" id="10069766at2759"/>
<dbReference type="PhylomeDB" id="Q8BXR5"/>
<dbReference type="Reactome" id="R-MMU-2672351">
    <property type="pathway name" value="Stimuli-sensing channels"/>
</dbReference>
<dbReference type="BioGRID-ORCS" id="338370">
    <property type="hits" value="2 hits in 77 CRISPR screens"/>
</dbReference>
<dbReference type="PRO" id="PR:Q8BXR5"/>
<dbReference type="Proteomes" id="UP000000589">
    <property type="component" value="Unplaced"/>
</dbReference>
<dbReference type="RNAct" id="Q8BXR5">
    <property type="molecule type" value="protein"/>
</dbReference>
<dbReference type="GO" id="GO:0034702">
    <property type="term" value="C:monoatomic ion channel complex"/>
    <property type="evidence" value="ECO:0007669"/>
    <property type="project" value="UniProtKB-KW"/>
</dbReference>
<dbReference type="GO" id="GO:0005886">
    <property type="term" value="C:plasma membrane"/>
    <property type="evidence" value="ECO:0007669"/>
    <property type="project" value="UniProtKB-SubCell"/>
</dbReference>
<dbReference type="GO" id="GO:0022840">
    <property type="term" value="F:leak channel activity"/>
    <property type="evidence" value="ECO:0000315"/>
    <property type="project" value="UniProtKB"/>
</dbReference>
<dbReference type="GO" id="GO:0005261">
    <property type="term" value="F:monoatomic cation channel activity"/>
    <property type="evidence" value="ECO:0000314"/>
    <property type="project" value="UniProtKB"/>
</dbReference>
<dbReference type="GO" id="GO:0005272">
    <property type="term" value="F:sodium channel activity"/>
    <property type="evidence" value="ECO:0007669"/>
    <property type="project" value="UniProtKB-KW"/>
</dbReference>
<dbReference type="GO" id="GO:0070588">
    <property type="term" value="P:calcium ion transmembrane transport"/>
    <property type="evidence" value="ECO:0000314"/>
    <property type="project" value="UniProtKB"/>
</dbReference>
<dbReference type="GO" id="GO:0071805">
    <property type="term" value="P:potassium ion transmembrane transport"/>
    <property type="evidence" value="ECO:0000314"/>
    <property type="project" value="UniProtKB"/>
</dbReference>
<dbReference type="GO" id="GO:0060075">
    <property type="term" value="P:regulation of resting membrane potential"/>
    <property type="evidence" value="ECO:0000315"/>
    <property type="project" value="UniProtKB"/>
</dbReference>
<dbReference type="GO" id="GO:0035725">
    <property type="term" value="P:sodium ion transmembrane transport"/>
    <property type="evidence" value="ECO:0000314"/>
    <property type="project" value="UniProtKB"/>
</dbReference>
<dbReference type="FunFam" id="1.10.238.10:FF:000080">
    <property type="entry name" value="Sodium leak channel non-selective protein"/>
    <property type="match status" value="1"/>
</dbReference>
<dbReference type="FunFam" id="1.10.287.70:FF:000060">
    <property type="entry name" value="Sodium leak channel non-selective protein"/>
    <property type="match status" value="1"/>
</dbReference>
<dbReference type="FunFam" id="1.10.287.70:FF:000061">
    <property type="entry name" value="Sodium leak channel non-selective protein"/>
    <property type="match status" value="1"/>
</dbReference>
<dbReference type="FunFam" id="1.10.287.70:FF:000066">
    <property type="entry name" value="Sodium leak channel non-selective protein"/>
    <property type="match status" value="1"/>
</dbReference>
<dbReference type="FunFam" id="1.20.120.350:FF:000032">
    <property type="entry name" value="Sodium leak channel non-selective protein"/>
    <property type="match status" value="1"/>
</dbReference>
<dbReference type="FunFam" id="1.20.120.350:FF:000034">
    <property type="entry name" value="Sodium leak channel non-selective protein"/>
    <property type="match status" value="1"/>
</dbReference>
<dbReference type="FunFam" id="1.20.120.350:FF:000038">
    <property type="entry name" value="Sodium leak channel non-selective protein"/>
    <property type="match status" value="1"/>
</dbReference>
<dbReference type="FunFam" id="1.10.287.70:FF:000065">
    <property type="entry name" value="sodium leak channel non-selective protein"/>
    <property type="match status" value="1"/>
</dbReference>
<dbReference type="FunFam" id="1.20.120.350:FF:000030">
    <property type="entry name" value="sodium leak channel non-selective protein"/>
    <property type="match status" value="1"/>
</dbReference>
<dbReference type="Gene3D" id="1.10.287.70">
    <property type="match status" value="4"/>
</dbReference>
<dbReference type="Gene3D" id="1.10.238.10">
    <property type="entry name" value="EF-hand"/>
    <property type="match status" value="1"/>
</dbReference>
<dbReference type="Gene3D" id="1.20.120.350">
    <property type="entry name" value="Voltage-gated potassium channels. Chain C"/>
    <property type="match status" value="4"/>
</dbReference>
<dbReference type="InterPro" id="IPR005821">
    <property type="entry name" value="Ion_trans_dom"/>
</dbReference>
<dbReference type="InterPro" id="IPR028823">
    <property type="entry name" value="NALCN"/>
</dbReference>
<dbReference type="InterPro" id="IPR027359">
    <property type="entry name" value="Volt_channel_dom_sf"/>
</dbReference>
<dbReference type="PANTHER" id="PTHR46141:SF1">
    <property type="entry name" value="SODIUM LEAK CHANNEL NALCN"/>
    <property type="match status" value="1"/>
</dbReference>
<dbReference type="PANTHER" id="PTHR46141">
    <property type="entry name" value="SODIUM LEAK CHANNEL NON-SELECTIVE PROTEIN"/>
    <property type="match status" value="1"/>
</dbReference>
<dbReference type="Pfam" id="PF00520">
    <property type="entry name" value="Ion_trans"/>
    <property type="match status" value="4"/>
</dbReference>
<dbReference type="SUPFAM" id="SSF81324">
    <property type="entry name" value="Voltage-gated potassium channels"/>
    <property type="match status" value="4"/>
</dbReference>
<organism>
    <name type="scientific">Mus musculus</name>
    <name type="common">Mouse</name>
    <dbReference type="NCBI Taxonomy" id="10090"/>
    <lineage>
        <taxon>Eukaryota</taxon>
        <taxon>Metazoa</taxon>
        <taxon>Chordata</taxon>
        <taxon>Craniata</taxon>
        <taxon>Vertebrata</taxon>
        <taxon>Euteleostomi</taxon>
        <taxon>Mammalia</taxon>
        <taxon>Eutheria</taxon>
        <taxon>Euarchontoglires</taxon>
        <taxon>Glires</taxon>
        <taxon>Rodentia</taxon>
        <taxon>Myomorpha</taxon>
        <taxon>Muroidea</taxon>
        <taxon>Muridae</taxon>
        <taxon>Murinae</taxon>
        <taxon>Mus</taxon>
        <taxon>Mus</taxon>
    </lineage>
</organism>
<keyword id="KW-0025">Alternative splicing</keyword>
<keyword id="KW-1003">Cell membrane</keyword>
<keyword id="KW-0175">Coiled coil</keyword>
<keyword id="KW-1015">Disulfide bond</keyword>
<keyword id="KW-0325">Glycoprotein</keyword>
<keyword id="KW-0407">Ion channel</keyword>
<keyword id="KW-0406">Ion transport</keyword>
<keyword id="KW-0472">Membrane</keyword>
<keyword id="KW-0597">Phosphoprotein</keyword>
<keyword id="KW-1185">Reference proteome</keyword>
<keyword id="KW-0677">Repeat</keyword>
<keyword id="KW-0915">Sodium</keyword>
<keyword id="KW-0894">Sodium channel</keyword>
<keyword id="KW-0739">Sodium transport</keyword>
<keyword id="KW-0812">Transmembrane</keyword>
<keyword id="KW-1133">Transmembrane helix</keyword>
<keyword id="KW-0813">Transport</keyword>
<keyword id="KW-0851">Voltage-gated channel</keyword>
<gene>
    <name type="primary">Nalcn</name>
    <name type="synonym">Vgcnl1</name>
</gene>
<protein>
    <recommendedName>
        <fullName evidence="12">Sodium leak channel NALCN</fullName>
    </recommendedName>
    <alternativeName>
        <fullName>Sodium leak channel non-selective protein</fullName>
    </alternativeName>
    <alternativeName>
        <fullName>Voltage gated channel-like protein 1</fullName>
    </alternativeName>
</protein>
<reference key="1">
    <citation type="journal article" date="2005" name="Science">
        <title>The transcriptional landscape of the mammalian genome.</title>
        <authorList>
            <person name="Carninci P."/>
            <person name="Kasukawa T."/>
            <person name="Katayama S."/>
            <person name="Gough J."/>
            <person name="Frith M.C."/>
            <person name="Maeda N."/>
            <person name="Oyama R."/>
            <person name="Ravasi T."/>
            <person name="Lenhard B."/>
            <person name="Wells C."/>
            <person name="Kodzius R."/>
            <person name="Shimokawa K."/>
            <person name="Bajic V.B."/>
            <person name="Brenner S.E."/>
            <person name="Batalov S."/>
            <person name="Forrest A.R."/>
            <person name="Zavolan M."/>
            <person name="Davis M.J."/>
            <person name="Wilming L.G."/>
            <person name="Aidinis V."/>
            <person name="Allen J.E."/>
            <person name="Ambesi-Impiombato A."/>
            <person name="Apweiler R."/>
            <person name="Aturaliya R.N."/>
            <person name="Bailey T.L."/>
            <person name="Bansal M."/>
            <person name="Baxter L."/>
            <person name="Beisel K.W."/>
            <person name="Bersano T."/>
            <person name="Bono H."/>
            <person name="Chalk A.M."/>
            <person name="Chiu K.P."/>
            <person name="Choudhary V."/>
            <person name="Christoffels A."/>
            <person name="Clutterbuck D.R."/>
            <person name="Crowe M.L."/>
            <person name="Dalla E."/>
            <person name="Dalrymple B.P."/>
            <person name="de Bono B."/>
            <person name="Della Gatta G."/>
            <person name="di Bernardo D."/>
            <person name="Down T."/>
            <person name="Engstrom P."/>
            <person name="Fagiolini M."/>
            <person name="Faulkner G."/>
            <person name="Fletcher C.F."/>
            <person name="Fukushima T."/>
            <person name="Furuno M."/>
            <person name="Futaki S."/>
            <person name="Gariboldi M."/>
            <person name="Georgii-Hemming P."/>
            <person name="Gingeras T.R."/>
            <person name="Gojobori T."/>
            <person name="Green R.E."/>
            <person name="Gustincich S."/>
            <person name="Harbers M."/>
            <person name="Hayashi Y."/>
            <person name="Hensch T.K."/>
            <person name="Hirokawa N."/>
            <person name="Hill D."/>
            <person name="Huminiecki L."/>
            <person name="Iacono M."/>
            <person name="Ikeo K."/>
            <person name="Iwama A."/>
            <person name="Ishikawa T."/>
            <person name="Jakt M."/>
            <person name="Kanapin A."/>
            <person name="Katoh M."/>
            <person name="Kawasawa Y."/>
            <person name="Kelso J."/>
            <person name="Kitamura H."/>
            <person name="Kitano H."/>
            <person name="Kollias G."/>
            <person name="Krishnan S.P."/>
            <person name="Kruger A."/>
            <person name="Kummerfeld S.K."/>
            <person name="Kurochkin I.V."/>
            <person name="Lareau L.F."/>
            <person name="Lazarevic D."/>
            <person name="Lipovich L."/>
            <person name="Liu J."/>
            <person name="Liuni S."/>
            <person name="McWilliam S."/>
            <person name="Madan Babu M."/>
            <person name="Madera M."/>
            <person name="Marchionni L."/>
            <person name="Matsuda H."/>
            <person name="Matsuzawa S."/>
            <person name="Miki H."/>
            <person name="Mignone F."/>
            <person name="Miyake S."/>
            <person name="Morris K."/>
            <person name="Mottagui-Tabar S."/>
            <person name="Mulder N."/>
            <person name="Nakano N."/>
            <person name="Nakauchi H."/>
            <person name="Ng P."/>
            <person name="Nilsson R."/>
            <person name="Nishiguchi S."/>
            <person name="Nishikawa S."/>
            <person name="Nori F."/>
            <person name="Ohara O."/>
            <person name="Okazaki Y."/>
            <person name="Orlando V."/>
            <person name="Pang K.C."/>
            <person name="Pavan W.J."/>
            <person name="Pavesi G."/>
            <person name="Pesole G."/>
            <person name="Petrovsky N."/>
            <person name="Piazza S."/>
            <person name="Reed J."/>
            <person name="Reid J.F."/>
            <person name="Ring B.Z."/>
            <person name="Ringwald M."/>
            <person name="Rost B."/>
            <person name="Ruan Y."/>
            <person name="Salzberg S.L."/>
            <person name="Sandelin A."/>
            <person name="Schneider C."/>
            <person name="Schoenbach C."/>
            <person name="Sekiguchi K."/>
            <person name="Semple C.A."/>
            <person name="Seno S."/>
            <person name="Sessa L."/>
            <person name="Sheng Y."/>
            <person name="Shibata Y."/>
            <person name="Shimada H."/>
            <person name="Shimada K."/>
            <person name="Silva D."/>
            <person name="Sinclair B."/>
            <person name="Sperling S."/>
            <person name="Stupka E."/>
            <person name="Sugiura K."/>
            <person name="Sultana R."/>
            <person name="Takenaka Y."/>
            <person name="Taki K."/>
            <person name="Tammoja K."/>
            <person name="Tan S.L."/>
            <person name="Tang S."/>
            <person name="Taylor M.S."/>
            <person name="Tegner J."/>
            <person name="Teichmann S.A."/>
            <person name="Ueda H.R."/>
            <person name="van Nimwegen E."/>
            <person name="Verardo R."/>
            <person name="Wei C.L."/>
            <person name="Yagi K."/>
            <person name="Yamanishi H."/>
            <person name="Zabarovsky E."/>
            <person name="Zhu S."/>
            <person name="Zimmer A."/>
            <person name="Hide W."/>
            <person name="Bult C."/>
            <person name="Grimmond S.M."/>
            <person name="Teasdale R.D."/>
            <person name="Liu E.T."/>
            <person name="Brusic V."/>
            <person name="Quackenbush J."/>
            <person name="Wahlestedt C."/>
            <person name="Mattick J.S."/>
            <person name="Hume D.A."/>
            <person name="Kai C."/>
            <person name="Sasaki D."/>
            <person name="Tomaru Y."/>
            <person name="Fukuda S."/>
            <person name="Kanamori-Katayama M."/>
            <person name="Suzuki M."/>
            <person name="Aoki J."/>
            <person name="Arakawa T."/>
            <person name="Iida J."/>
            <person name="Imamura K."/>
            <person name="Itoh M."/>
            <person name="Kato T."/>
            <person name="Kawaji H."/>
            <person name="Kawagashira N."/>
            <person name="Kawashima T."/>
            <person name="Kojima M."/>
            <person name="Kondo S."/>
            <person name="Konno H."/>
            <person name="Nakano K."/>
            <person name="Ninomiya N."/>
            <person name="Nishio T."/>
            <person name="Okada M."/>
            <person name="Plessy C."/>
            <person name="Shibata K."/>
            <person name="Shiraki T."/>
            <person name="Suzuki S."/>
            <person name="Tagami M."/>
            <person name="Waki K."/>
            <person name="Watahiki A."/>
            <person name="Okamura-Oho Y."/>
            <person name="Suzuki H."/>
            <person name="Kawai J."/>
            <person name="Hayashizaki Y."/>
        </authorList>
    </citation>
    <scope>NUCLEOTIDE SEQUENCE [LARGE SCALE MRNA] (ISOFORM 2)</scope>
    <scope>NUCLEOTIDE SEQUENCE [LARGE SCALE MRNA] OF 1229-1738 (ISOFORM 1)</scope>
    <source>
        <strain>C57BL/6J</strain>
        <tissue>Hypothalamus</tissue>
        <tissue>Retina</tissue>
    </source>
</reference>
<reference key="2">
    <citation type="journal article" date="2009" name="PLoS Biol.">
        <title>Lineage-specific biology revealed by a finished genome assembly of the mouse.</title>
        <authorList>
            <person name="Church D.M."/>
            <person name="Goodstadt L."/>
            <person name="Hillier L.W."/>
            <person name="Zody M.C."/>
            <person name="Goldstein S."/>
            <person name="She X."/>
            <person name="Bult C.J."/>
            <person name="Agarwala R."/>
            <person name="Cherry J.L."/>
            <person name="DiCuccio M."/>
            <person name="Hlavina W."/>
            <person name="Kapustin Y."/>
            <person name="Meric P."/>
            <person name="Maglott D."/>
            <person name="Birtle Z."/>
            <person name="Marques A.C."/>
            <person name="Graves T."/>
            <person name="Zhou S."/>
            <person name="Teague B."/>
            <person name="Potamousis K."/>
            <person name="Churas C."/>
            <person name="Place M."/>
            <person name="Herschleb J."/>
            <person name="Runnheim R."/>
            <person name="Forrest D."/>
            <person name="Amos-Landgraf J."/>
            <person name="Schwartz D.C."/>
            <person name="Cheng Z."/>
            <person name="Lindblad-Toh K."/>
            <person name="Eichler E.E."/>
            <person name="Ponting C.P."/>
        </authorList>
    </citation>
    <scope>NUCLEOTIDE SEQUENCE [LARGE SCALE GENOMIC DNA]</scope>
    <source>
        <strain>C57BL/6J</strain>
    </source>
</reference>
<reference key="3">
    <citation type="journal article" date="2007" name="Cell">
        <title>The neuronal channel NALCN contributes resting sodium permeability and is required for normal respiratory rhythm.</title>
        <authorList>
            <person name="Lu B."/>
            <person name="Su Y."/>
            <person name="Das S."/>
            <person name="Liu J."/>
            <person name="Xia J."/>
            <person name="Ren D."/>
        </authorList>
    </citation>
    <scope>FUNCTION</scope>
    <scope>TISSUE SPECIFICITY</scope>
    <scope>DISRUPTION PHENOTYPE</scope>
</reference>
<reference key="4">
    <citation type="journal article" date="2009" name="Nature">
        <title>Peptide neurotransmitters activate a cation channel complex of NALCN and UNC-80.</title>
        <authorList>
            <person name="Lu B."/>
            <person name="Su Y."/>
            <person name="Das S."/>
            <person name="Wang H."/>
            <person name="Wang Y."/>
            <person name="Liu J."/>
            <person name="Ren D."/>
        </authorList>
    </citation>
    <scope>FUNCTION</scope>
    <scope>PHOSPHORYLATION</scope>
    <scope>INTERACTION WITH UNC80</scope>
</reference>
<reference key="5">
    <citation type="journal article" date="2009" name="EMBO Rep.">
        <title>The NALCN ion channel is activated by M3 muscarinic receptors in a pancreatic beta-cell line.</title>
        <authorList>
            <person name="Swayne L.A."/>
            <person name="Mezghrani A."/>
            <person name="Varrault A."/>
            <person name="Chemin J."/>
            <person name="Bertrand G."/>
            <person name="Dalle S."/>
            <person name="Bourinet E."/>
            <person name="Lory P."/>
            <person name="Miller R.J."/>
            <person name="Nargeot J."/>
            <person name="Monteil A."/>
        </authorList>
    </citation>
    <scope>FUNCTION</scope>
    <scope>TISSUE SPECIFICITY</scope>
    <scope>INTERACTION WITH CHRM3</scope>
</reference>
<reference key="6">
    <citation type="journal article" date="2010" name="Neuron">
        <title>Extracellular calcium controls background current and neuronal excitability via an UNC79-UNC80-NALCN cation channel complex.</title>
        <authorList>
            <person name="Lu B."/>
            <person name="Zhang Q."/>
            <person name="Wang H."/>
            <person name="Wang Y."/>
            <person name="Nakayama M."/>
            <person name="Ren D."/>
        </authorList>
    </citation>
    <scope>SUBUNIT</scope>
    <scope>FUNCTION</scope>
</reference>
<reference key="7">
    <citation type="journal article" date="2011" name="Physiol. Genomics">
        <title>Genetic analysis of mouse strains with variable serum sodium concentrations identifies the Nalcn sodium channel as a novel player in osmoregulation.</title>
        <authorList>
            <person name="Sinke A.P."/>
            <person name="Caputo C."/>
            <person name="Tsaih S.W."/>
            <person name="Yuan R."/>
            <person name="Ren D."/>
            <person name="Deen P.M."/>
            <person name="Korstanje R."/>
        </authorList>
    </citation>
    <scope>FUNCTION</scope>
</reference>
<reference key="8">
    <citation type="journal article" date="2012" name="Cell. Physiol. Biochem.">
        <title>Involvement of Na(+)-leak channel in substance P-induced depolarization of pacemaking activity in interstitial cells of Cajal.</title>
        <authorList>
            <person name="Kim B.J."/>
            <person name="Chang I.Y."/>
            <person name="Choi S."/>
            <person name="Jun J.Y."/>
            <person name="Jeon J.H."/>
            <person name="Xu W.X."/>
            <person name="Kwon Y.K."/>
            <person name="Ren D."/>
            <person name="So I."/>
        </authorList>
    </citation>
    <scope>FUNCTION</scope>
</reference>
<reference key="9">
    <citation type="journal article" date="2016" name="Elife">
        <title>The leak channel NALCN controls tonic firing and glycolytic sensitivity of substantia nigra pars reticulata neurons.</title>
        <authorList>
            <person name="Lutas A."/>
            <person name="Lahmann C."/>
            <person name="Soumillon M."/>
            <person name="Yellen G."/>
        </authorList>
    </citation>
    <scope>FUNCTION</scope>
</reference>
<feature type="chain" id="PRO_0000314011" description="Sodium leak channel NALCN">
    <location>
        <begin position="1"/>
        <end position="1738"/>
    </location>
</feature>
<feature type="topological domain" description="Cytoplasmic" evidence="1">
    <location>
        <begin position="1"/>
        <end position="36"/>
    </location>
</feature>
<feature type="transmembrane region" description="Helical; Name=S1 of repeat I" evidence="1">
    <location>
        <begin position="37"/>
        <end position="57"/>
    </location>
</feature>
<feature type="topological domain" description="Extracellular" evidence="1">
    <location>
        <begin position="58"/>
        <end position="65"/>
    </location>
</feature>
<feature type="transmembrane region" description="Helical; Name=S2 of repeat I" evidence="1">
    <location>
        <begin position="66"/>
        <end position="90"/>
    </location>
</feature>
<feature type="topological domain" description="Cytoplasmic" evidence="1">
    <location>
        <begin position="91"/>
        <end position="106"/>
    </location>
</feature>
<feature type="transmembrane region" description="Helical; Name=S3 of repeat I" evidence="1">
    <location>
        <begin position="107"/>
        <end position="129"/>
    </location>
</feature>
<feature type="topological domain" description="Extracellular" evidence="1">
    <location>
        <begin position="130"/>
        <end position="137"/>
    </location>
</feature>
<feature type="transmembrane region" description="Helical; Voltage-sensor; Name=S4 of repeat I" evidence="1">
    <location>
        <begin position="138"/>
        <end position="158"/>
    </location>
</feature>
<feature type="topological domain" description="Cytoplasmic" evidence="1">
    <location>
        <begin position="159"/>
        <end position="173"/>
    </location>
</feature>
<feature type="transmembrane region" description="Helical; Name=S5 of repeat I" evidence="1">
    <location>
        <begin position="174"/>
        <end position="199"/>
    </location>
</feature>
<feature type="topological domain" description="Extracellular" evidence="1">
    <location>
        <begin position="200"/>
        <end position="269"/>
    </location>
</feature>
<feature type="intramembrane region" description="Pore-forming" evidence="1">
    <location>
        <begin position="270"/>
        <end position="289"/>
    </location>
</feature>
<feature type="topological domain" description="Extracellular" evidence="1">
    <location>
        <begin position="290"/>
        <end position="294"/>
    </location>
</feature>
<feature type="transmembrane region" description="Helical; Name=S6 of repeat I" evidence="1">
    <location>
        <begin position="295"/>
        <end position="322"/>
    </location>
</feature>
<feature type="topological domain" description="Cytoplasmic" evidence="1">
    <location>
        <begin position="323"/>
        <end position="382"/>
    </location>
</feature>
<feature type="transmembrane region" description="Helical; Name=S1 of repeat II" evidence="1">
    <location>
        <begin position="383"/>
        <end position="403"/>
    </location>
</feature>
<feature type="topological domain" description="Extracellular" evidence="1">
    <location>
        <begin position="404"/>
        <end position="416"/>
    </location>
</feature>
<feature type="transmembrane region" description="Helical; Name=S2 of repeat II" evidence="1">
    <location>
        <begin position="417"/>
        <end position="439"/>
    </location>
</feature>
<feature type="topological domain" description="Cytoplasmic" evidence="1">
    <location>
        <begin position="440"/>
        <end position="447"/>
    </location>
</feature>
<feature type="transmembrane region" description="Helical; Name=S3 of repeat II" evidence="1">
    <location>
        <begin position="448"/>
        <end position="468"/>
    </location>
</feature>
<feature type="topological domain" description="Extracellular" evidence="1">
    <location>
        <begin position="469"/>
        <end position="472"/>
    </location>
</feature>
<feature type="transmembrane region" description="Helical; Voltage-sensor; Name=S4 of repeat II" evidence="1">
    <location>
        <begin position="473"/>
        <end position="492"/>
    </location>
</feature>
<feature type="topological domain" description="Cytoplasmic" evidence="1">
    <location>
        <begin position="493"/>
        <end position="502"/>
    </location>
</feature>
<feature type="transmembrane region" description="Helical; Name=S5 of repeat II" evidence="1">
    <location>
        <begin position="503"/>
        <end position="530"/>
    </location>
</feature>
<feature type="topological domain" description="Extracellular" evidence="1">
    <location>
        <begin position="531"/>
        <end position="543"/>
    </location>
</feature>
<feature type="intramembrane region" description="Pore-forming" evidence="1">
    <location>
        <begin position="544"/>
        <end position="563"/>
    </location>
</feature>
<feature type="topological domain" description="Extracellular" evidence="1">
    <location>
        <begin position="564"/>
        <end position="578"/>
    </location>
</feature>
<feature type="transmembrane region" description="Helical; Name=S6 of repeat II" evidence="1">
    <location>
        <begin position="579"/>
        <end position="599"/>
    </location>
</feature>
<feature type="topological domain" description="Cytoplasmic" evidence="1">
    <location>
        <begin position="600"/>
        <end position="886"/>
    </location>
</feature>
<feature type="transmembrane region" description="Helical; Name=S1 of repeat III" evidence="1">
    <location>
        <begin position="887"/>
        <end position="906"/>
    </location>
</feature>
<feature type="topological domain" description="Extracellular" evidence="1">
    <location>
        <begin position="907"/>
        <end position="915"/>
    </location>
</feature>
<feature type="transmembrane region" description="Helical; Name=S2 of repeat III" evidence="1">
    <location>
        <begin position="916"/>
        <end position="939"/>
    </location>
</feature>
<feature type="topological domain" description="Cytoplasmic" evidence="1">
    <location>
        <begin position="940"/>
        <end position="947"/>
    </location>
</feature>
<feature type="transmembrane region" description="Helical; Name=S3 of repeat III" evidence="1">
    <location>
        <begin position="948"/>
        <end position="972"/>
    </location>
</feature>
<feature type="topological domain" description="Extracellular" evidence="1">
    <location>
        <begin position="973"/>
        <end position="980"/>
    </location>
</feature>
<feature type="transmembrane region" description="Helical; Voltage-sensor; Name=S4 of repeat III" evidence="1">
    <location>
        <begin position="981"/>
        <end position="1003"/>
    </location>
</feature>
<feature type="topological domain" description="Cytoplasmic" evidence="1">
    <location>
        <begin position="1004"/>
        <end position="1015"/>
    </location>
</feature>
<feature type="transmembrane region" description="Helical; Name=S5 of repeat III" evidence="1">
    <location>
        <begin position="1016"/>
        <end position="1039"/>
    </location>
</feature>
<feature type="topological domain" description="Extracellular" evidence="1">
    <location>
        <begin position="1040"/>
        <end position="1104"/>
    </location>
</feature>
<feature type="intramembrane region" description="Pore-forming" evidence="1">
    <location>
        <begin position="1105"/>
        <end position="1124"/>
    </location>
</feature>
<feature type="topological domain" description="Extracellular" evidence="1">
    <location>
        <begin position="1125"/>
        <end position="1129"/>
    </location>
</feature>
<feature type="transmembrane region" description="Helical; Name=S6 of repeat III" evidence="1">
    <location>
        <begin position="1130"/>
        <end position="1159"/>
    </location>
</feature>
<feature type="topological domain" description="Cytoplasmic" evidence="1">
    <location>
        <begin position="1160"/>
        <end position="1210"/>
    </location>
</feature>
<feature type="transmembrane region" description="Helical; Name=S1 of repeat IV" evidence="1">
    <location>
        <begin position="1211"/>
        <end position="1227"/>
    </location>
</feature>
<feature type="topological domain" description="Extracellular" evidence="1">
    <location>
        <begin position="1228"/>
        <end position="1236"/>
    </location>
</feature>
<feature type="transmembrane region" description="Helical; Name=S2 of repeat IV" evidence="1">
    <location>
        <begin position="1237"/>
        <end position="1260"/>
    </location>
</feature>
<feature type="topological domain" description="Cytoplasmic" evidence="1">
    <location>
        <begin position="1261"/>
        <end position="1271"/>
    </location>
</feature>
<feature type="transmembrane region" description="Helical; Name=S3 of repeat IV" evidence="1">
    <location>
        <begin position="1272"/>
        <end position="1293"/>
    </location>
</feature>
<feature type="topological domain" description="Extracellular" evidence="1">
    <location>
        <begin position="1294"/>
        <end position="1296"/>
    </location>
</feature>
<feature type="transmembrane region" description="Helical; Voltage-sensor; Name=S4 of repeat IV" evidence="1">
    <location>
        <begin position="1297"/>
        <end position="1318"/>
    </location>
</feature>
<feature type="topological domain" description="Cytoplasmic" evidence="1">
    <location>
        <begin position="1319"/>
        <end position="1331"/>
    </location>
</feature>
<feature type="transmembrane region" description="Helical; Name=S5 of repeat IV" evidence="1">
    <location>
        <begin position="1332"/>
        <end position="1357"/>
    </location>
</feature>
<feature type="topological domain" description="Extracellular" evidence="1">
    <location>
        <begin position="1358"/>
        <end position="1378"/>
    </location>
</feature>
<feature type="intramembrane region" description="Pore-forming" evidence="1">
    <location>
        <begin position="1379"/>
        <end position="1398"/>
    </location>
</feature>
<feature type="topological domain" description="Extracellular" evidence="1">
    <location>
        <begin position="1399"/>
        <end position="1420"/>
    </location>
</feature>
<feature type="transmembrane region" description="Helical; Name=S6 of repeat IV" evidence="1">
    <location>
        <begin position="1421"/>
        <end position="1447"/>
    </location>
</feature>
<feature type="topological domain" description="Cytoplasmic" evidence="1">
    <location>
        <begin position="1448"/>
        <end position="1738"/>
    </location>
</feature>
<feature type="region of interest" description="Disordered" evidence="3">
    <location>
        <begin position="762"/>
        <end position="785"/>
    </location>
</feature>
<feature type="region of interest" description="Disordered" evidence="3">
    <location>
        <begin position="1602"/>
        <end position="1679"/>
    </location>
</feature>
<feature type="coiled-coil region" evidence="2">
    <location>
        <begin position="795"/>
        <end position="830"/>
    </location>
</feature>
<feature type="compositionally biased region" description="Polar residues" evidence="3">
    <location>
        <begin position="1613"/>
        <end position="1631"/>
    </location>
</feature>
<feature type="compositionally biased region" description="Low complexity" evidence="3">
    <location>
        <begin position="1633"/>
        <end position="1648"/>
    </location>
</feature>
<feature type="glycosylation site" description="N-linked (GlcNAc...) asparagine" evidence="1">
    <location>
        <position position="210"/>
    </location>
</feature>
<feature type="glycosylation site" description="N-linked (GlcNAc...) asparagine" evidence="1">
    <location>
        <position position="216"/>
    </location>
</feature>
<feature type="glycosylation site" description="N-linked (GlcNAc...) asparagine" evidence="1">
    <location>
        <position position="1064"/>
    </location>
</feature>
<feature type="disulfide bond" evidence="1">
    <location>
        <begin position="207"/>
        <end position="239"/>
    </location>
</feature>
<feature type="disulfide bond" evidence="1">
    <location>
        <begin position="229"/>
        <end position="245"/>
    </location>
</feature>
<feature type="disulfide bond" evidence="1">
    <location>
        <begin position="1046"/>
        <end position="1057"/>
    </location>
</feature>
<feature type="disulfide bond" evidence="1">
    <location>
        <begin position="1405"/>
        <end position="1417"/>
    </location>
</feature>
<feature type="splice variant" id="VSP_030192" description="In isoform 2." evidence="11">
    <location>
        <begin position="216"/>
        <end position="1738"/>
    </location>
</feature>
<feature type="sequence conflict" description="In Ref. 1; BAC31915." evidence="12" ref="1">
    <original>V</original>
    <variation>F</variation>
    <location>
        <position position="1229"/>
    </location>
</feature>
<feature type="sequence conflict" description="In Ref. 1; BAC31915." evidence="12" ref="1">
    <original>R</original>
    <variation>RL</variation>
    <location>
        <position position="1607"/>
    </location>
</feature>
<comment type="function">
    <text evidence="1 5 6 7 8 9 10">Voltage-gated ion channel responsible for the resting Na(+) permeability that controls neuronal excitability. NALCN channel functions as a multi-protein complex, which consists at least of NALCN, NALF1, UNC79 and UNC80. NALCN is the voltage-sensing, pore-forming subunit of the NALCN channel complex. NALCN channel complex is constitutively active and conducts monovalent cations but is blocked by physiological concentrations of extracellular divalent cations (By similarity). In addition to its role in regulating neuronal excitability, is required for normal respiratory rhythm, systemic osmoregulation by controlling the serum sodium concentration and in the regulation of the intestinal pace-making activity in the interstitial cells of Cajal (PubMed:21177381, PubMed:22508057). Plays a critical role in both maintenance of spontaneous firing of substantia nigra pars reticulata (SNr) neurons and physiological modulation of SNr neuron excitability (PubMed:27177420). NALCN channel is also activated by neuropeptides such as neurotensin and substance P (SP) through a SRC family kinases-dependent pathway (PubMed:19092807). In addition, NALCN activity is enhanced/modulated by several GPCRs, such as CHRM3 (PubMed:19092807, PubMed:19575010, PubMed:21040849).</text>
</comment>
<comment type="catalytic activity">
    <reaction evidence="1">
        <text>Na(+)(in) = Na(+)(out)</text>
        <dbReference type="Rhea" id="RHEA:34963"/>
        <dbReference type="ChEBI" id="CHEBI:29101"/>
    </reaction>
</comment>
<comment type="activity regulation">
    <text evidence="1">Inhibited by low micromolar concentrations of Gd(3+) and high micromolar concentrations of verapamil. Insensitive to tetrodotoxin (TTX) and potentiated by low external Ca(2+) concentration.</text>
</comment>
<comment type="subunit">
    <text evidence="1 5 6 7">Found in a complex with NALCN, UNC79, UNC80 and NACL1; these auxiliary subunits are indispensable for the function of the NALCN channel (By similarity). Interacts with UNC80; required for the NALCN activation/inhibition by GPCRs in neurons (PubMed:19092807, PubMed:21040849). Found in a complex with NALCN, UNC79 and UNC80; UNC80 bridges NALCN to UNC79 (PubMed:21040849). Interacts with CHRM3 (PubMed:19575010).</text>
</comment>
<comment type="interaction">
    <interactant intactId="EBI-11570410">
        <id>Q8BXR5</id>
    </interactant>
    <interactant intactId="EBI-15747640">
        <id>Q8BLN6</id>
        <label>Unc80</label>
    </interactant>
    <organismsDiffer>false</organismsDiffer>
    <experiments>2</experiments>
</comment>
<comment type="subcellular location">
    <subcellularLocation>
        <location evidence="1">Cell membrane</location>
        <topology evidence="2">Multi-pass membrane protein</topology>
    </subcellularLocation>
</comment>
<comment type="alternative products">
    <event type="alternative splicing"/>
    <isoform>
        <id>Q8BXR5-1</id>
        <name>1</name>
        <sequence type="displayed"/>
    </isoform>
    <isoform>
        <id>Q8BXR5-2</id>
        <name>2</name>
        <sequence type="described" ref="VSP_030192"/>
    </isoform>
</comment>
<comment type="tissue specificity">
    <text evidence="4 6">Widely expressed in the brain and spinal cord neurons (PubMed:17448995). Expressed also in pancreatic islet cells (PubMed:19575010).</text>
</comment>
<comment type="domain">
    <text>Contains 24 transmembrane helices (TM) that form four homologous functional repeats connected by intracellular linkers. Each of the four internal repeats contains five hydrophobic transmembrane segments (S1, S2, S3, S5, S6) and one positively charged transmembrane segment (S4). S4 segments represent the voltage-sensor. S4 transmembrane segments lack some of the charged residues (K and R) found at every third position in the S4s of the NaV, CaV, and KV channels. Pore-forming loops (P loops) between S5 and S6 of each domain form an EEKE sodium- ion selectivity filter a mixture between the EEEE found in the CaVs and the DEKA of NaVs. Voltage-sensing domains (VSDs), formed by S1 to S4 of each domain, detect changes in membrane potential and induce the opening or closing of the ion-conducting pore domain, formed by S5 and S6.</text>
</comment>
<comment type="PTM">
    <text evidence="5">Phosphorylated on tyrosine residues.</text>
</comment>
<comment type="disruption phenotype">
    <text evidence="4">Deficient mice exhibit abnormal breathing at birth and die within 24 hours.</text>
</comment>
<comment type="similarity">
    <text evidence="12">Belongs to the NALCN family.</text>
</comment>
<comment type="caution">
    <text evidence="1 4">NALCN was also originally reported to be a voltage-independent, cation-nonselective channel which is permeable to sodium, potassium and calcium ions (PubMed:17448995). However, NALCN is recently reported to be selective only for monovalent cations and to be blocked by extracellular divalent cations (By similarity). Futhemore, coexpression of NALCN, UNC79, UNC80, and NALF1 results in voltage-dependent NALCN currents (By similarity).</text>
</comment>
<comment type="sequence caution" evidence="12">
    <conflict type="frameshift">
        <sequence resource="EMBL-CDS" id="BAC31915"/>
    </conflict>
</comment>
<sequence length="1738" mass="200441">MLKRKQSSRVEAQPVTDFGPDESLSDNADILWINKPWVHSLLRICAIISVISVCMNTPMTFEHYPPLQYVTFTLDTLLMFLYTAEMIAKMHIRGIVKGDSSYVKDRWCVFDGFMVFCLWVSLVLQVFEIADIVDQMSPWGMLRIPRPLIMIRAFRIYFRFELPRTRITNILKRSGEQIWSVSIFLLFFLLLYGILGVQMFGTFTYHCVVNDTKPGNVTWNSLAIPDTHCSPELEEGYQCPPGFKCMDLEDLGLSRQELGYSGFNEIGTSIFTVYEASSQEGWVFLMYRAIDSFPRWRSYFYFITLIFFLAWLVKNVFIAVIIETFAEIRVQFQQMWGTRSSTTSTATTQMFHEDAAGGWQLVAVDVNKPQGRAPACLQKMMRSSVFHMFILSMVTVDVIVAASNYYKGENFRRQYDEFYLAEVAFTVLFDLEALLKIWCLGFTGYISSSLHKFELLLVIGTTLHVYPDLYHSQFTYFQVLRVVRLIKISPALEDFVYKIFGPGKKLGSLVVFTASLLIVMSAISLQMFCFVEELDRFTTFPRAFMSMFQILTQEGWVDVMDQTLNAVGHMWAPLVAIYFILYHLFATLILLSLFVAVILDNLELDEDLKKLKQLKQSEANADTKEKLPLRLRIFEKFPNRPQMVKISKLPSDFTVPKIRESFMKQFIDRQQQDTCCLFRILPSTSSSSCDNPKKPTAEDNKYIDQKLRKSVFSIRARNLLEKETAVTKILRACTRQRMLSGSFEGQPAKERSILSVQHHIRQERRSLRHGSNSQRISRGKSLETLTQDHSNTVRYRNAQREDSEIKMIQEKKEQAEMKRKVQEEELRENHPYFDKPLFIVGREHRFRNFCRVVVRARFNASKTDPVTGAVKNTKYHQLYDLLGLVTYLDWVMITVTICSCISMMFESPFRRVMHAPTLQIAEYVFVIFMSIELNLKIMADGLFFTPTAVIRDFGGVMDIFIYLVSLIFLCWMPQNVPAESGAQLLMVLRCLRPLRIFKLVPQMRKVVRELFSGFKEIFLVSILLLTLMLVFASFGVQLFAGKLAKCNDPNIIRREDCNGIFRINVSVSKNLNLKLRPGEKKPGFWVPRVWANPRNFNFDNVGNAMLALFEVLSLKGWVEVRDVIIHRVGPIHGIYIHVFVFLGCMIGLTLFVGVVIANFNENKGTALLTVDQRRWEDLKSRLKIAQPLHLPPRPDNDGFRAKMYDITQHPFFKRTIALLVLAQSVLLSVKWDVDDPVTVPLATMSVVFTFIFVLEVTMKIIAMSPAGFWQSRRNRYDLLVTSLGVVWVVLHFALLNAYTYMMGACVIVFRFFSICGKHVTLKMLLLTVVVSMYKSFFIIVGMFLLLLCYAFAGVVLFGTVKYGENINRHANFSSAGKAITVLFRIVTGEDWNKIMHDCMVQPPFCTPDEFTYWATDCGNYAGALMYFCSFYVIIAYIMLNLLVAIIVENFSLFYSTEEDQLLSYNDLRHFQIIWNMVDDKREGVIPTFRVKFLLRLLRGRLEVDLDKDKLLFKHMCYEMERLHNGGDVTFHDVLSMLSYRSVDIRKSLQLEELLAREQLEYTIEEEVAKQTIRMWLKKCLKRIRAKQQQSCSIIHSLRESQEQERSRFLNPPSIETTQPSEDSNANSQDHSMQPETSSQQQLLSPTLSDRGGSRQDAADTGKPQRKIGQWRLPSAPKPISHSVSSVNLRFGGRTTMKTVVCKMNPMPDTASCGSEVKKWWTRQLTVESDESGDDLLDI</sequence>
<proteinExistence type="evidence at protein level"/>
<evidence type="ECO:0000250" key="1">
    <source>
        <dbReference type="UniProtKB" id="Q8IZF0"/>
    </source>
</evidence>
<evidence type="ECO:0000255" key="2"/>
<evidence type="ECO:0000256" key="3">
    <source>
        <dbReference type="SAM" id="MobiDB-lite"/>
    </source>
</evidence>
<evidence type="ECO:0000269" key="4">
    <source>
    </source>
</evidence>
<evidence type="ECO:0000269" key="5">
    <source>
    </source>
</evidence>
<evidence type="ECO:0000269" key="6">
    <source>
    </source>
</evidence>
<evidence type="ECO:0000269" key="7">
    <source>
    </source>
</evidence>
<evidence type="ECO:0000269" key="8">
    <source>
    </source>
</evidence>
<evidence type="ECO:0000269" key="9">
    <source>
    </source>
</evidence>
<evidence type="ECO:0000269" key="10">
    <source>
    </source>
</evidence>
<evidence type="ECO:0000303" key="11">
    <source>
    </source>
</evidence>
<evidence type="ECO:0000305" key="12"/>
<accession>Q8BXR5</accession>
<accession>Q8BYM2</accession>